<comment type="function">
    <text evidence="2 3 13">The small GTPases Rab are key regulators of intracellular membrane trafficking, from the formation of transport vesicles to their fusion with membranes. Rabs cycle between an inactive GDP-bound form and an active GTP-bound form that is able to recruit to membranes different sets of downstream effectors directly responsible for vesicle formation, movement, tethering and fusion (By similarity). RAB9A is involved in the transport of proteins between the endosomes and the trans-Golgi network (TGN) (PubMed:34793709). Specifically uses NDE1/NDEL1 as an effector to interact with the dynein motor complex in order to control retrograde trafficking of RAB9-associated late endosomes to the TGN (PubMed:34793709). Involved in the recruitment of SGSM2 to melanosomes and is required for the proper trafficking of melanogenic enzymes TYR, TYRP1 and DCT/TYRP2 to melanosomes in melanocytes (By similarity).</text>
</comment>
<comment type="catalytic activity">
    <reaction evidence="3">
        <text>GTP + H2O = GDP + phosphate + H(+)</text>
        <dbReference type="Rhea" id="RHEA:19669"/>
        <dbReference type="ChEBI" id="CHEBI:15377"/>
        <dbReference type="ChEBI" id="CHEBI:15378"/>
        <dbReference type="ChEBI" id="CHEBI:37565"/>
        <dbReference type="ChEBI" id="CHEBI:43474"/>
        <dbReference type="ChEBI" id="CHEBI:58189"/>
        <dbReference type="EC" id="3.6.5.2"/>
    </reaction>
    <physiologicalReaction direction="left-to-right" evidence="3">
        <dbReference type="Rhea" id="RHEA:19670"/>
    </physiologicalReaction>
</comment>
<comment type="cofactor">
    <cofactor evidence="13">
        <name>Mg(2+)</name>
        <dbReference type="ChEBI" id="CHEBI:18420"/>
    </cofactor>
</comment>
<comment type="activity regulation">
    <text evidence="14">Regulated by guanine nucleotide exchange factors (GEFs) which promote the exchange of bound GDP for free GTP. Regulated by GTPase activating proteins (GAPs) which increase the GTP hydrolysis activity. Inhibited by GDP dissociation inhibitors (GDIs).</text>
</comment>
<comment type="subunit">
    <text evidence="7 8 9 11 12 13">Interacts (preferentially in its GTP-bound form) with GCC2 (via its GRIP domain) (PubMed:16885419, PubMed:18243103). Interacts (GTP-bound form) with SGSM1; the GDP-bound form has much lower affinity for SGSM1 (PubMed:22637480). Interacts with SGSM2 (PubMed:21808068). The GTP-bound form but not the GDP-bound form interacts with HPS4 and BLOC-3 complex (heterodimer of HPS1 and HPS4) but does not interact with HPS1 alone (PubMed:20048159). Interacts (GTP-bound form) with NDE1; two RAB9A-GTP molecules lie on the opposite sides of the NDE1 homodimer; the interaction leads to RAB9A-dynein motor tethering (PubMed:34793709). Interacts (GTP-bound form) with NDEL1 (PubMed:34793709).</text>
</comment>
<comment type="interaction">
    <interactant intactId="EBI-4401353">
        <id>P51151</id>
    </interactant>
    <interactant intactId="EBI-2688731">
        <id>Q9Y2I1</id>
        <label>NISCH</label>
    </interactant>
    <organismsDiffer>false</organismsDiffer>
    <experiments>8</experiments>
</comment>
<comment type="interaction">
    <interactant intactId="EBI-4401353">
        <id>P51151</id>
    </interactant>
    <interactant intactId="EBI-726484">
        <id>Q8IWE5</id>
        <label>PLEKHM2</label>
    </interactant>
    <organismsDiffer>false</organismsDiffer>
    <experiments>4</experiments>
</comment>
<comment type="subcellular location">
    <subcellularLocation>
        <location evidence="14">Cell membrane</location>
        <topology evidence="14">Lipid-anchor</topology>
        <orientation evidence="14">Cytoplasmic side</orientation>
    </subcellularLocation>
    <subcellularLocation>
        <location evidence="14">Endoplasmic reticulum membrane</location>
    </subcellularLocation>
    <subcellularLocation>
        <location evidence="15">Golgi apparatus membrane</location>
    </subcellularLocation>
    <subcellularLocation>
        <location evidence="6 13">Late endosome</location>
    </subcellularLocation>
    <subcellularLocation>
        <location evidence="14">Cytoplasmic vesicle</location>
        <location evidence="14">Phagosome membrane</location>
        <topology evidence="14">Lipid-anchor</topology>
        <orientation evidence="14">Cytoplasmic side</orientation>
    </subcellularLocation>
    <subcellularLocation>
        <location evidence="10">Cytoplasmic vesicle</location>
        <location evidence="10">Phagosome</location>
    </subcellularLocation>
    <subcellularLocation>
        <location evidence="13">Cytoplasmic vesicle membrane</location>
    </subcellularLocation>
    <subcellularLocation>
        <location evidence="4">Melanosome</location>
    </subcellularLocation>
    <text evidence="6 10 13">Colocalizes with OSBPL1A at the late endosome (PubMed:16176980). Recruited to phagosomes containing S.aureus or M.tuberculosis (PubMed:21255211). Mainly localizes to late endosomes and partially localizes to Golgi (PubMed:34793709). Colocalizes with NDE1 to membrane vesicles (PubMed:34793709).</text>
</comment>
<comment type="domain">
    <text evidence="13">Switch 1, switch 2 and the interswitch regions are characteristic of Rab GTPases and mediate the interactions with Rab downstream effectors. The switch regions undergo conformational changes upon nucleotide binding which drives interaction with specific sets of effector proteins, with most effectors only binding to GTP-bound Rab.</text>
</comment>
<comment type="similarity">
    <text evidence="14">Belongs to the small GTPase superfamily. Rab family.</text>
</comment>
<protein>
    <recommendedName>
        <fullName>Ras-related protein Rab-9A</fullName>
        <ecNumber evidence="3">3.6.5.2</ecNumber>
    </recommendedName>
</protein>
<gene>
    <name evidence="16" type="primary">RAB9A</name>
    <name type="synonym">RAB9</name>
</gene>
<reference key="1">
    <citation type="journal article" date="1997" name="Genomics">
        <title>Cloning and mapping of human Rab7 and Rab9 cDNA sequences and identification of a Rab9 pseudogene.</title>
        <authorList>
            <person name="Davies J.P."/>
            <person name="Cotter P.D."/>
            <person name="Ioannou Y.A."/>
        </authorList>
    </citation>
    <scope>NUCLEOTIDE SEQUENCE [MRNA]</scope>
</reference>
<reference key="2">
    <citation type="submission" date="2002-04" db="EMBL/GenBank/DDBJ databases">
        <title>cDNA clones of human proteins involved in signal transduction sequenced by the Guthrie cDNA resource center (www.cdna.org).</title>
        <authorList>
            <person name="Puhl H.L. III"/>
            <person name="Ikeda S.R."/>
            <person name="Aronstam R.S."/>
        </authorList>
    </citation>
    <scope>NUCLEOTIDE SEQUENCE [LARGE SCALE MRNA]</scope>
    <source>
        <tissue>Brain</tissue>
    </source>
</reference>
<reference key="3">
    <citation type="submission" date="2004-05" db="EMBL/GenBank/DDBJ databases">
        <title>Cloning of human full open reading frames in Gateway(TM) system entry vector (pDONR201).</title>
        <authorList>
            <person name="Ebert L."/>
            <person name="Schick M."/>
            <person name="Neubert P."/>
            <person name="Schatten R."/>
            <person name="Henze S."/>
            <person name="Korn B."/>
        </authorList>
    </citation>
    <scope>NUCLEOTIDE SEQUENCE [LARGE SCALE MRNA]</scope>
</reference>
<reference key="4">
    <citation type="journal article" date="2004" name="Nat. Genet.">
        <title>Complete sequencing and characterization of 21,243 full-length human cDNAs.</title>
        <authorList>
            <person name="Ota T."/>
            <person name="Suzuki Y."/>
            <person name="Nishikawa T."/>
            <person name="Otsuki T."/>
            <person name="Sugiyama T."/>
            <person name="Irie R."/>
            <person name="Wakamatsu A."/>
            <person name="Hayashi K."/>
            <person name="Sato H."/>
            <person name="Nagai K."/>
            <person name="Kimura K."/>
            <person name="Makita H."/>
            <person name="Sekine M."/>
            <person name="Obayashi M."/>
            <person name="Nishi T."/>
            <person name="Shibahara T."/>
            <person name="Tanaka T."/>
            <person name="Ishii S."/>
            <person name="Yamamoto J."/>
            <person name="Saito K."/>
            <person name="Kawai Y."/>
            <person name="Isono Y."/>
            <person name="Nakamura Y."/>
            <person name="Nagahari K."/>
            <person name="Murakami K."/>
            <person name="Yasuda T."/>
            <person name="Iwayanagi T."/>
            <person name="Wagatsuma M."/>
            <person name="Shiratori A."/>
            <person name="Sudo H."/>
            <person name="Hosoiri T."/>
            <person name="Kaku Y."/>
            <person name="Kodaira H."/>
            <person name="Kondo H."/>
            <person name="Sugawara M."/>
            <person name="Takahashi M."/>
            <person name="Kanda K."/>
            <person name="Yokoi T."/>
            <person name="Furuya T."/>
            <person name="Kikkawa E."/>
            <person name="Omura Y."/>
            <person name="Abe K."/>
            <person name="Kamihara K."/>
            <person name="Katsuta N."/>
            <person name="Sato K."/>
            <person name="Tanikawa M."/>
            <person name="Yamazaki M."/>
            <person name="Ninomiya K."/>
            <person name="Ishibashi T."/>
            <person name="Yamashita H."/>
            <person name="Murakawa K."/>
            <person name="Fujimori K."/>
            <person name="Tanai H."/>
            <person name="Kimata M."/>
            <person name="Watanabe M."/>
            <person name="Hiraoka S."/>
            <person name="Chiba Y."/>
            <person name="Ishida S."/>
            <person name="Ono Y."/>
            <person name="Takiguchi S."/>
            <person name="Watanabe S."/>
            <person name="Yosida M."/>
            <person name="Hotuta T."/>
            <person name="Kusano J."/>
            <person name="Kanehori K."/>
            <person name="Takahashi-Fujii A."/>
            <person name="Hara H."/>
            <person name="Tanase T.-O."/>
            <person name="Nomura Y."/>
            <person name="Togiya S."/>
            <person name="Komai F."/>
            <person name="Hara R."/>
            <person name="Takeuchi K."/>
            <person name="Arita M."/>
            <person name="Imose N."/>
            <person name="Musashino K."/>
            <person name="Yuuki H."/>
            <person name="Oshima A."/>
            <person name="Sasaki N."/>
            <person name="Aotsuka S."/>
            <person name="Yoshikawa Y."/>
            <person name="Matsunawa H."/>
            <person name="Ichihara T."/>
            <person name="Shiohata N."/>
            <person name="Sano S."/>
            <person name="Moriya S."/>
            <person name="Momiyama H."/>
            <person name="Satoh N."/>
            <person name="Takami S."/>
            <person name="Terashima Y."/>
            <person name="Suzuki O."/>
            <person name="Nakagawa S."/>
            <person name="Senoh A."/>
            <person name="Mizoguchi H."/>
            <person name="Goto Y."/>
            <person name="Shimizu F."/>
            <person name="Wakebe H."/>
            <person name="Hishigaki H."/>
            <person name="Watanabe T."/>
            <person name="Sugiyama A."/>
            <person name="Takemoto M."/>
            <person name="Kawakami B."/>
            <person name="Yamazaki M."/>
            <person name="Watanabe K."/>
            <person name="Kumagai A."/>
            <person name="Itakura S."/>
            <person name="Fukuzumi Y."/>
            <person name="Fujimori Y."/>
            <person name="Komiyama M."/>
            <person name="Tashiro H."/>
            <person name="Tanigami A."/>
            <person name="Fujiwara T."/>
            <person name="Ono T."/>
            <person name="Yamada K."/>
            <person name="Fujii Y."/>
            <person name="Ozaki K."/>
            <person name="Hirao M."/>
            <person name="Ohmori Y."/>
            <person name="Kawabata A."/>
            <person name="Hikiji T."/>
            <person name="Kobatake N."/>
            <person name="Inagaki H."/>
            <person name="Ikema Y."/>
            <person name="Okamoto S."/>
            <person name="Okitani R."/>
            <person name="Kawakami T."/>
            <person name="Noguchi S."/>
            <person name="Itoh T."/>
            <person name="Shigeta K."/>
            <person name="Senba T."/>
            <person name="Matsumura K."/>
            <person name="Nakajima Y."/>
            <person name="Mizuno T."/>
            <person name="Morinaga M."/>
            <person name="Sasaki M."/>
            <person name="Togashi T."/>
            <person name="Oyama M."/>
            <person name="Hata H."/>
            <person name="Watanabe M."/>
            <person name="Komatsu T."/>
            <person name="Mizushima-Sugano J."/>
            <person name="Satoh T."/>
            <person name="Shirai Y."/>
            <person name="Takahashi Y."/>
            <person name="Nakagawa K."/>
            <person name="Okumura K."/>
            <person name="Nagase T."/>
            <person name="Nomura N."/>
            <person name="Kikuchi H."/>
            <person name="Masuho Y."/>
            <person name="Yamashita R."/>
            <person name="Nakai K."/>
            <person name="Yada T."/>
            <person name="Nakamura Y."/>
            <person name="Ohara O."/>
            <person name="Isogai T."/>
            <person name="Sugano S."/>
        </authorList>
    </citation>
    <scope>NUCLEOTIDE SEQUENCE [LARGE SCALE MRNA]</scope>
    <source>
        <tissue>Brain</tissue>
    </source>
</reference>
<reference key="5">
    <citation type="submission" date="2005-07" db="EMBL/GenBank/DDBJ databases">
        <authorList>
            <person name="Mural R.J."/>
            <person name="Istrail S."/>
            <person name="Sutton G.G."/>
            <person name="Florea L."/>
            <person name="Halpern A.L."/>
            <person name="Mobarry C.M."/>
            <person name="Lippert R."/>
            <person name="Walenz B."/>
            <person name="Shatkay H."/>
            <person name="Dew I."/>
            <person name="Miller J.R."/>
            <person name="Flanigan M.J."/>
            <person name="Edwards N.J."/>
            <person name="Bolanos R."/>
            <person name="Fasulo D."/>
            <person name="Halldorsson B.V."/>
            <person name="Hannenhalli S."/>
            <person name="Turner R."/>
            <person name="Yooseph S."/>
            <person name="Lu F."/>
            <person name="Nusskern D.R."/>
            <person name="Shue B.C."/>
            <person name="Zheng X.H."/>
            <person name="Zhong F."/>
            <person name="Delcher A.L."/>
            <person name="Huson D.H."/>
            <person name="Kravitz S.A."/>
            <person name="Mouchard L."/>
            <person name="Reinert K."/>
            <person name="Remington K.A."/>
            <person name="Clark A.G."/>
            <person name="Waterman M.S."/>
            <person name="Eichler E.E."/>
            <person name="Adams M.D."/>
            <person name="Hunkapiller M.W."/>
            <person name="Myers E.W."/>
            <person name="Venter J.C."/>
        </authorList>
    </citation>
    <scope>NUCLEOTIDE SEQUENCE [LARGE SCALE GENOMIC DNA]</scope>
</reference>
<reference key="6">
    <citation type="journal article" date="2004" name="Genome Res.">
        <title>The status, quality, and expansion of the NIH full-length cDNA project: the Mammalian Gene Collection (MGC).</title>
        <authorList>
            <consortium name="The MGC Project Team"/>
        </authorList>
    </citation>
    <scope>NUCLEOTIDE SEQUENCE [LARGE SCALE MRNA]</scope>
    <source>
        <tissue>Muscle</tissue>
    </source>
</reference>
<reference key="7">
    <citation type="journal article" date="2005" name="Mol. Biol. Cell">
        <title>The oxysterol-binding protein homologue ORP1L interacts with Rab7 and alters functional properties of late endocytic compartments.</title>
        <authorList>
            <person name="Johansson M."/>
            <person name="Lehto M."/>
            <person name="Tanhuanpaeae K."/>
            <person name="Cover T.L."/>
            <person name="Olkkonen V.M."/>
        </authorList>
    </citation>
    <scope>SUBCELLULAR LOCATION</scope>
</reference>
<reference key="8">
    <citation type="journal article" date="2006" name="Cell">
        <title>Global, in vivo, and site-specific phosphorylation dynamics in signaling networks.</title>
        <authorList>
            <person name="Olsen J.V."/>
            <person name="Blagoev B."/>
            <person name="Gnad F."/>
            <person name="Macek B."/>
            <person name="Kumar C."/>
            <person name="Mortensen P."/>
            <person name="Mann M."/>
        </authorList>
    </citation>
    <scope>PHOSPHORYLATION [LARGE SCALE ANALYSIS] AT SER-179</scope>
    <scope>IDENTIFICATION BY MASS SPECTROMETRY [LARGE SCALE ANALYSIS]</scope>
    <source>
        <tissue>Cervix carcinoma</tissue>
    </source>
</reference>
<reference key="9">
    <citation type="journal article" date="2006" name="Mol. Biol. Cell">
        <title>A functional role for the GCC185 golgin in mannose 6-phosphate receptor recycling.</title>
        <authorList>
            <person name="Reddy J.V."/>
            <person name="Burguete A.S."/>
            <person name="Sridevi K."/>
            <person name="Ganley I.G."/>
            <person name="Nottingham R.M."/>
            <person name="Pfeffer S.R."/>
        </authorList>
    </citation>
    <scope>INTERACTION WITH GCC2</scope>
</reference>
<reference key="10">
    <citation type="journal article" date="2008" name="Cell">
        <title>Rab and Arl GTPase family members cooperate in the localization of the golgin GCC185.</title>
        <authorList>
            <person name="Burguete A.S."/>
            <person name="Fenn T.D."/>
            <person name="Brunger A.T."/>
            <person name="Pfeffer S.R."/>
        </authorList>
    </citation>
    <scope>INTERACTION WITH GCC2</scope>
</reference>
<reference key="11">
    <citation type="journal article" date="2008" name="Proc. Natl. Acad. Sci. U.S.A.">
        <title>A quantitative atlas of mitotic phosphorylation.</title>
        <authorList>
            <person name="Dephoure N."/>
            <person name="Zhou C."/>
            <person name="Villen J."/>
            <person name="Beausoleil S.A."/>
            <person name="Bakalarski C.E."/>
            <person name="Elledge S.J."/>
            <person name="Gygi S.P."/>
        </authorList>
    </citation>
    <scope>IDENTIFICATION BY MASS SPECTROMETRY [LARGE SCALE ANALYSIS]</scope>
    <source>
        <tissue>Cervix carcinoma</tissue>
    </source>
</reference>
<reference key="12">
    <citation type="journal article" date="2010" name="J. Biol. Chem.">
        <title>Assembly of the biogenesis of lysosome-related organelles complex-3 (BLOC-3) and its interaction with Rab9.</title>
        <authorList>
            <person name="Kloer D.P."/>
            <person name="Rojas R."/>
            <person name="Ivan V."/>
            <person name="Moriyama K."/>
            <person name="van Vlijmen T."/>
            <person name="Murthy N."/>
            <person name="Ghirlando R."/>
            <person name="van der Sluijs P."/>
            <person name="Hurley J.H."/>
            <person name="Bonifacino J.S."/>
        </authorList>
    </citation>
    <scope>INTERACTION WITH HPS4 AND BLOC-3 COMPLEX</scope>
    <scope>ABSENCE OF INTERACTION WITH HPS1</scope>
    <scope>MUTAGENESIS OF ILE-40; PHE-44; TRP-61 AND GLN-66</scope>
</reference>
<reference key="13">
    <citation type="journal article" date="2010" name="Sci. Signal.">
        <title>Quantitative phosphoproteomics reveals widespread full phosphorylation site occupancy during mitosis.</title>
        <authorList>
            <person name="Olsen J.V."/>
            <person name="Vermeulen M."/>
            <person name="Santamaria A."/>
            <person name="Kumar C."/>
            <person name="Miller M.L."/>
            <person name="Jensen L.J."/>
            <person name="Gnad F."/>
            <person name="Cox J."/>
            <person name="Jensen T.S."/>
            <person name="Nigg E.A."/>
            <person name="Brunak S."/>
            <person name="Mann M."/>
        </authorList>
    </citation>
    <scope>IDENTIFICATION BY MASS SPECTROMETRY [LARGE SCALE ANALYSIS]</scope>
    <source>
        <tissue>Cervix carcinoma</tissue>
    </source>
</reference>
<reference key="14">
    <citation type="journal article" date="2011" name="BMC Syst. Biol.">
        <title>Initial characterization of the human central proteome.</title>
        <authorList>
            <person name="Burkard T.R."/>
            <person name="Planyavsky M."/>
            <person name="Kaupe I."/>
            <person name="Breitwieser F.P."/>
            <person name="Buerckstuemmer T."/>
            <person name="Bennett K.L."/>
            <person name="Superti-Furga G."/>
            <person name="Colinge J."/>
        </authorList>
    </citation>
    <scope>IDENTIFICATION BY MASS SPECTROMETRY [LARGE SCALE ANALYSIS]</scope>
</reference>
<reference key="15">
    <citation type="journal article" date="2011" name="J. Biol. Chem.">
        <title>RUTBC1 protein, a Rab9A effector that activates GTP hydrolysis by Rab32 and Rab33B proteins.</title>
        <authorList>
            <person name="Nottingham R.M."/>
            <person name="Ganley I.G."/>
            <person name="Barr F.A."/>
            <person name="Lambright D.G."/>
            <person name="Pfeffer S.R."/>
        </authorList>
    </citation>
    <scope>INTERACTION WITH SGSM2</scope>
</reference>
<reference key="16">
    <citation type="journal article" date="2011" name="Traffic">
        <title>Rab GTPases regulating phagosome maturation are differentially recruited to mycobacterial phagosomes.</title>
        <authorList>
            <person name="Seto S."/>
            <person name="Tsujimura K."/>
            <person name="Koide Y."/>
        </authorList>
    </citation>
    <scope>SUBCELLULAR LOCATION</scope>
</reference>
<reference key="17">
    <citation type="journal article" date="2012" name="J. Biol. Chem.">
        <title>RUTBC2 protein, a Rab9A effector and GTPase-activating protein for Rab36.</title>
        <authorList>
            <person name="Nottingham R.M."/>
            <person name="Pusapati G.V."/>
            <person name="Ganley I.G."/>
            <person name="Barr F.A."/>
            <person name="Lambright D.G."/>
            <person name="Pfeffer S.R."/>
        </authorList>
    </citation>
    <scope>INTERACTION WITH SGSM1</scope>
</reference>
<reference key="18">
    <citation type="journal article" date="2012" name="Proc. Natl. Acad. Sci. U.S.A.">
        <title>N-terminal acetylome analyses and functional insights of the N-terminal acetyltransferase NatB.</title>
        <authorList>
            <person name="Van Damme P."/>
            <person name="Lasa M."/>
            <person name="Polevoda B."/>
            <person name="Gazquez C."/>
            <person name="Elosegui-Artola A."/>
            <person name="Kim D.S."/>
            <person name="De Juan-Pardo E."/>
            <person name="Demeyer K."/>
            <person name="Hole K."/>
            <person name="Larrea E."/>
            <person name="Timmerman E."/>
            <person name="Prieto J."/>
            <person name="Arnesen T."/>
            <person name="Sherman F."/>
            <person name="Gevaert K."/>
            <person name="Aldabe R."/>
        </authorList>
    </citation>
    <scope>ACETYLATION [LARGE SCALE ANALYSIS] AT ALA-2</scope>
    <scope>CLEAVAGE OF INITIATOR METHIONINE [LARGE SCALE ANALYSIS]</scope>
    <scope>IDENTIFICATION BY MASS SPECTROMETRY [LARGE SCALE ANALYSIS]</scope>
</reference>
<reference key="19">
    <citation type="journal article" date="2013" name="J. Proteome Res.">
        <title>Toward a comprehensive characterization of a human cancer cell phosphoproteome.</title>
        <authorList>
            <person name="Zhou H."/>
            <person name="Di Palma S."/>
            <person name="Preisinger C."/>
            <person name="Peng M."/>
            <person name="Polat A.N."/>
            <person name="Heck A.J."/>
            <person name="Mohammed S."/>
        </authorList>
    </citation>
    <scope>IDENTIFICATION BY MASS SPECTROMETRY [LARGE SCALE ANALYSIS]</scope>
    <source>
        <tissue>Cervix carcinoma</tissue>
    </source>
</reference>
<reference key="20">
    <citation type="journal article" date="2014" name="J. Proteomics">
        <title>An enzyme assisted RP-RPLC approach for in-depth analysis of human liver phosphoproteome.</title>
        <authorList>
            <person name="Bian Y."/>
            <person name="Song C."/>
            <person name="Cheng K."/>
            <person name="Dong M."/>
            <person name="Wang F."/>
            <person name="Huang J."/>
            <person name="Sun D."/>
            <person name="Wang L."/>
            <person name="Ye M."/>
            <person name="Zou H."/>
        </authorList>
    </citation>
    <scope>PHOSPHORYLATION [LARGE SCALE ANALYSIS] AT THR-187</scope>
    <scope>IDENTIFICATION BY MASS SPECTROMETRY [LARGE SCALE ANALYSIS]</scope>
    <source>
        <tissue>Liver</tissue>
    </source>
</reference>
<reference key="21">
    <citation type="journal article" date="2015" name="Proteomics">
        <title>N-terminome analysis of the human mitochondrial proteome.</title>
        <authorList>
            <person name="Vaca Jacome A.S."/>
            <person name="Rabilloud T."/>
            <person name="Schaeffer-Reiss C."/>
            <person name="Rompais M."/>
            <person name="Ayoub D."/>
            <person name="Lane L."/>
            <person name="Bairoch A."/>
            <person name="Van Dorsselaer A."/>
            <person name="Carapito C."/>
        </authorList>
    </citation>
    <scope>IDENTIFICATION BY MASS SPECTROMETRY [LARGE SCALE ANALYSIS]</scope>
</reference>
<reference evidence="17" key="22">
    <citation type="journal article" date="2004" name="J. Biol. Chem.">
        <title>High resolution crystal structure of human Rab9 GTPase: a novel antiviral drug target.</title>
        <authorList>
            <person name="Chen L."/>
            <person name="DiGiammarino E."/>
            <person name="Zhou X.E."/>
            <person name="Wang Y."/>
            <person name="Toh D."/>
            <person name="Hodge T.W."/>
            <person name="Meehan E.J."/>
        </authorList>
    </citation>
    <scope>X-RAY CRYSTALLOGRAPHY (1.25 ANGSTROMS) OF 1-177 IN COMPLEX WITH GDP</scope>
</reference>
<reference evidence="18" key="23">
    <citation type="journal article" date="2022" name="Structure">
        <title>Nde1 is a Rab9 effector for loading late endosomes to cytoplasmic dynein motor complex.</title>
        <authorList>
            <person name="Zhang Y."/>
            <person name="Chen Z."/>
            <person name="Wang F."/>
            <person name="Sun H."/>
            <person name="Zhu X."/>
            <person name="Ding J."/>
            <person name="Zhang T."/>
        </authorList>
    </citation>
    <scope>X-RAY CRYSTALLOGRAPHY (2.45 ANGSTROMS) IN COMPLEX WITH GTP; MG(2+) AND NDE1</scope>
    <scope>FUNCTION</scope>
    <scope>INTERACTION WITH NDE1</scope>
    <scope>COFACTOR</scope>
    <scope>SUBCELLULAR LOCATION</scope>
    <scope>MUTAGENESIS OF ILE-40; GLU-43; PHE-44; ASN-46; TRP-61 AND LEU-72</scope>
    <scope>DOMAIN</scope>
</reference>
<sequence>MAGKSSLFKVILLGDGGVGKSSLMNRYVTNKFDTQLFHTIGVEFLNKDLEVDGHFVTMQIWDTAGQERFRSLRTPFYRGSDCCLLTFSVDDSQSFQNLSNWKKEFIYYADVKEPESFPFVILGNKIDISERQVSTEEAQAWCRDNGDYPYFETSAKDATNVAAAFEEAVRRVLATEDRSDHLIQTDTVNLHRKPKPSSSCC</sequence>
<name>RAB9A_HUMAN</name>
<organism>
    <name type="scientific">Homo sapiens</name>
    <name type="common">Human</name>
    <dbReference type="NCBI Taxonomy" id="9606"/>
    <lineage>
        <taxon>Eukaryota</taxon>
        <taxon>Metazoa</taxon>
        <taxon>Chordata</taxon>
        <taxon>Craniata</taxon>
        <taxon>Vertebrata</taxon>
        <taxon>Euteleostomi</taxon>
        <taxon>Mammalia</taxon>
        <taxon>Eutheria</taxon>
        <taxon>Euarchontoglires</taxon>
        <taxon>Primates</taxon>
        <taxon>Haplorrhini</taxon>
        <taxon>Catarrhini</taxon>
        <taxon>Hominidae</taxon>
        <taxon>Homo</taxon>
    </lineage>
</organism>
<accession>P51151</accession>
<accession>A8K390</accession>
<accession>Q6ICN1</accession>
<proteinExistence type="evidence at protein level"/>
<keyword id="KW-0002">3D-structure</keyword>
<keyword id="KW-0007">Acetylation</keyword>
<keyword id="KW-1003">Cell membrane</keyword>
<keyword id="KW-0968">Cytoplasmic vesicle</keyword>
<keyword id="KW-0256">Endoplasmic reticulum</keyword>
<keyword id="KW-0967">Endosome</keyword>
<keyword id="KW-0333">Golgi apparatus</keyword>
<keyword id="KW-0342">GTP-binding</keyword>
<keyword id="KW-0378">Hydrolase</keyword>
<keyword id="KW-0449">Lipoprotein</keyword>
<keyword id="KW-0472">Membrane</keyword>
<keyword id="KW-0547">Nucleotide-binding</keyword>
<keyword id="KW-0597">Phosphoprotein</keyword>
<keyword id="KW-0636">Prenylation</keyword>
<keyword id="KW-0653">Protein transport</keyword>
<keyword id="KW-1267">Proteomics identification</keyword>
<keyword id="KW-1185">Reference proteome</keyword>
<keyword id="KW-0813">Transport</keyword>
<evidence type="ECO:0000250" key="1"/>
<evidence type="ECO:0000250" key="2">
    <source>
        <dbReference type="UniProtKB" id="P24408"/>
    </source>
</evidence>
<evidence type="ECO:0000250" key="3">
    <source>
        <dbReference type="UniProtKB" id="P62820"/>
    </source>
</evidence>
<evidence type="ECO:0000250" key="4">
    <source>
        <dbReference type="UniProtKB" id="Q9R0M6"/>
    </source>
</evidence>
<evidence type="ECO:0000269" key="5">
    <source>
    </source>
</evidence>
<evidence type="ECO:0000269" key="6">
    <source>
    </source>
</evidence>
<evidence type="ECO:0000269" key="7">
    <source>
    </source>
</evidence>
<evidence type="ECO:0000269" key="8">
    <source>
    </source>
</evidence>
<evidence type="ECO:0000269" key="9">
    <source>
    </source>
</evidence>
<evidence type="ECO:0000269" key="10">
    <source>
    </source>
</evidence>
<evidence type="ECO:0000269" key="11">
    <source>
    </source>
</evidence>
<evidence type="ECO:0000269" key="12">
    <source>
    </source>
</evidence>
<evidence type="ECO:0000269" key="13">
    <source>
    </source>
</evidence>
<evidence type="ECO:0000305" key="14"/>
<evidence type="ECO:0000305" key="15">
    <source>
    </source>
</evidence>
<evidence type="ECO:0000312" key="16">
    <source>
        <dbReference type="HGNC" id="HGNC:9792"/>
    </source>
</evidence>
<evidence type="ECO:0007744" key="17">
    <source>
        <dbReference type="PDB" id="1WMS"/>
    </source>
</evidence>
<evidence type="ECO:0007744" key="18">
    <source>
        <dbReference type="PDB" id="7E1T"/>
    </source>
</evidence>
<evidence type="ECO:0007744" key="19">
    <source>
    </source>
</evidence>
<evidence type="ECO:0007744" key="20">
    <source>
    </source>
</evidence>
<evidence type="ECO:0007744" key="21">
    <source>
    </source>
</evidence>
<evidence type="ECO:0007829" key="22">
    <source>
        <dbReference type="PDB" id="1WMS"/>
    </source>
</evidence>
<feature type="initiator methionine" description="Removed" evidence="20">
    <location>
        <position position="1"/>
    </location>
</feature>
<feature type="chain" id="PRO_0000121139" description="Ras-related protein Rab-9A">
    <location>
        <begin position="2"/>
        <end position="201"/>
    </location>
</feature>
<feature type="short sequence motif" description="Switch 1" evidence="13 18">
    <location>
        <begin position="31"/>
        <end position="42"/>
    </location>
</feature>
<feature type="short sequence motif" description="Switch 2" evidence="13 18">
    <location>
        <begin position="64"/>
        <end position="78"/>
    </location>
</feature>
<feature type="binding site" evidence="5 17">
    <location>
        <position position="17"/>
    </location>
    <ligand>
        <name>GDP</name>
        <dbReference type="ChEBI" id="CHEBI:58189"/>
    </ligand>
</feature>
<feature type="binding site" evidence="13 18">
    <location>
        <position position="17"/>
    </location>
    <ligand>
        <name>GTP</name>
        <dbReference type="ChEBI" id="CHEBI:37565"/>
    </ligand>
</feature>
<feature type="binding site" evidence="13 18">
    <location>
        <position position="18"/>
    </location>
    <ligand>
        <name>GTP</name>
        <dbReference type="ChEBI" id="CHEBI:37565"/>
    </ligand>
</feature>
<feature type="binding site" evidence="5 17">
    <location>
        <position position="19"/>
    </location>
    <ligand>
        <name>GDP</name>
        <dbReference type="ChEBI" id="CHEBI:58189"/>
    </ligand>
</feature>
<feature type="binding site" evidence="13 18">
    <location>
        <position position="19"/>
    </location>
    <ligand>
        <name>GTP</name>
        <dbReference type="ChEBI" id="CHEBI:37565"/>
    </ligand>
</feature>
<feature type="binding site" evidence="5 17">
    <location>
        <position position="20"/>
    </location>
    <ligand>
        <name>GDP</name>
        <dbReference type="ChEBI" id="CHEBI:58189"/>
    </ligand>
</feature>
<feature type="binding site" evidence="13 18">
    <location>
        <position position="20"/>
    </location>
    <ligand>
        <name>GTP</name>
        <dbReference type="ChEBI" id="CHEBI:37565"/>
    </ligand>
</feature>
<feature type="binding site" evidence="5 17">
    <location>
        <position position="21"/>
    </location>
    <ligand>
        <name>GDP</name>
        <dbReference type="ChEBI" id="CHEBI:58189"/>
    </ligand>
</feature>
<feature type="binding site" evidence="13 18">
    <location>
        <position position="21"/>
    </location>
    <ligand>
        <name>GTP</name>
        <dbReference type="ChEBI" id="CHEBI:37565"/>
    </ligand>
</feature>
<feature type="binding site" evidence="13 18">
    <location>
        <position position="21"/>
    </location>
    <ligand>
        <name>Mg(2+)</name>
        <dbReference type="ChEBI" id="CHEBI:18420"/>
    </ligand>
</feature>
<feature type="binding site" evidence="5 17">
    <location>
        <position position="22"/>
    </location>
    <ligand>
        <name>GDP</name>
        <dbReference type="ChEBI" id="CHEBI:58189"/>
    </ligand>
</feature>
<feature type="binding site" evidence="13 18">
    <location>
        <position position="22"/>
    </location>
    <ligand>
        <name>GTP</name>
        <dbReference type="ChEBI" id="CHEBI:37565"/>
    </ligand>
</feature>
<feature type="binding site" evidence="13 18">
    <location>
        <position position="34"/>
    </location>
    <ligand>
        <name>GTP</name>
        <dbReference type="ChEBI" id="CHEBI:37565"/>
    </ligand>
</feature>
<feature type="binding site" evidence="13 18">
    <location>
        <position position="38"/>
    </location>
    <ligand>
        <name>GTP</name>
        <dbReference type="ChEBI" id="CHEBI:37565"/>
    </ligand>
</feature>
<feature type="binding site" evidence="13 18">
    <location>
        <position position="39"/>
    </location>
    <ligand>
        <name>GTP</name>
        <dbReference type="ChEBI" id="CHEBI:37565"/>
    </ligand>
</feature>
<feature type="binding site" evidence="13 18">
    <location>
        <position position="39"/>
    </location>
    <ligand>
        <name>Mg(2+)</name>
        <dbReference type="ChEBI" id="CHEBI:18420"/>
    </ligand>
</feature>
<feature type="binding site" evidence="13 18">
    <location>
        <position position="62"/>
    </location>
    <ligand>
        <name>Mg(2+)</name>
        <dbReference type="ChEBI" id="CHEBI:18420"/>
    </ligand>
</feature>
<feature type="binding site" evidence="13 18">
    <location>
        <position position="65"/>
    </location>
    <ligand>
        <name>GTP</name>
        <dbReference type="ChEBI" id="CHEBI:37565"/>
    </ligand>
</feature>
<feature type="binding site" evidence="5 17">
    <location>
        <position position="124"/>
    </location>
    <ligand>
        <name>GDP</name>
        <dbReference type="ChEBI" id="CHEBI:58189"/>
    </ligand>
</feature>
<feature type="binding site" evidence="13 18">
    <location>
        <position position="124"/>
    </location>
    <ligand>
        <name>GTP</name>
        <dbReference type="ChEBI" id="CHEBI:37565"/>
    </ligand>
</feature>
<feature type="binding site" evidence="5 17">
    <location>
        <position position="125"/>
    </location>
    <ligand>
        <name>GDP</name>
        <dbReference type="ChEBI" id="CHEBI:58189"/>
    </ligand>
</feature>
<feature type="binding site" evidence="13 18">
    <location>
        <position position="125"/>
    </location>
    <ligand>
        <name>GTP</name>
        <dbReference type="ChEBI" id="CHEBI:37565"/>
    </ligand>
</feature>
<feature type="binding site" evidence="5 17">
    <location>
        <position position="127"/>
    </location>
    <ligand>
        <name>GDP</name>
        <dbReference type="ChEBI" id="CHEBI:58189"/>
    </ligand>
</feature>
<feature type="binding site" evidence="13 18">
    <location>
        <position position="127"/>
    </location>
    <ligand>
        <name>GTP</name>
        <dbReference type="ChEBI" id="CHEBI:37565"/>
    </ligand>
</feature>
<feature type="binding site" evidence="5 17">
    <location>
        <position position="155"/>
    </location>
    <ligand>
        <name>GDP</name>
        <dbReference type="ChEBI" id="CHEBI:58189"/>
    </ligand>
</feature>
<feature type="binding site" evidence="13 18">
    <location>
        <position position="155"/>
    </location>
    <ligand>
        <name>GTP</name>
        <dbReference type="ChEBI" id="CHEBI:37565"/>
    </ligand>
</feature>
<feature type="binding site" evidence="5 17">
    <location>
        <position position="156"/>
    </location>
    <ligand>
        <name>GDP</name>
        <dbReference type="ChEBI" id="CHEBI:58189"/>
    </ligand>
</feature>
<feature type="binding site" evidence="13 18">
    <location>
        <position position="156"/>
    </location>
    <ligand>
        <name>GTP</name>
        <dbReference type="ChEBI" id="CHEBI:37565"/>
    </ligand>
</feature>
<feature type="modified residue" description="N-acetylalanine" evidence="20">
    <location>
        <position position="2"/>
    </location>
</feature>
<feature type="modified residue" description="Phosphoserine" evidence="19">
    <location>
        <position position="179"/>
    </location>
</feature>
<feature type="modified residue" description="Phosphothreonine" evidence="21">
    <location>
        <position position="187"/>
    </location>
</feature>
<feature type="lipid moiety-binding region" description="S-geranylgeranyl cysteine" evidence="1">
    <location>
        <position position="200"/>
    </location>
</feature>
<feature type="lipid moiety-binding region" description="S-geranylgeranyl cysteine" evidence="1">
    <location>
        <position position="201"/>
    </location>
</feature>
<feature type="mutagenesis site" description="Loss of interaction with HPS4; when associated with L-66." evidence="9">
    <original>I</original>
    <variation>L</variation>
    <location>
        <position position="40"/>
    </location>
</feature>
<feature type="mutagenesis site" description="Loss of interaction with NDE1 and the dynein complex. Loss of localization to intracellular membrane vesicles." evidence="13">
    <original>I</original>
    <variation>R</variation>
    <location>
        <position position="40"/>
    </location>
</feature>
<feature type="mutagenesis site" description="Decreased interaction with NDE1." evidence="13">
    <original>E</original>
    <variation>A</variation>
    <location>
        <position position="43"/>
    </location>
</feature>
<feature type="mutagenesis site" description="Loss of interaction with NDE1 and the dynein complex. Loss of localization to intracellular membrane vesicles." evidence="13">
    <original>F</original>
    <variation>D</variation>
    <location>
        <position position="44"/>
    </location>
</feature>
<feature type="mutagenesis site" description="Loss of interaction with HPS4; when associated with L-66." evidence="9">
    <original>F</original>
    <variation>L</variation>
    <location>
        <position position="44"/>
    </location>
</feature>
<feature type="mutagenesis site" description="Loss of interaction with NDE1." evidence="13">
    <original>N</original>
    <variation>A</variation>
    <variation>I</variation>
    <variation>S</variation>
    <variation>T</variation>
    <variation>V</variation>
    <location>
        <position position="46"/>
    </location>
</feature>
<feature type="mutagenesis site" description="Loss of interaction with NDE1. No change in localization to intracellular membrane vesicles." evidence="13">
    <original>W</original>
    <variation>D</variation>
    <location>
        <position position="61"/>
    </location>
</feature>
<feature type="mutagenesis site" description="Loss of interaction with HPS4; when associated with L-66." evidence="9">
    <original>W</original>
    <variation>L</variation>
    <location>
        <position position="61"/>
    </location>
</feature>
<feature type="mutagenesis site" description="Loss of interaction with HPS4; when associated with L-40 or L-44 or L-61." evidence="9">
    <original>Q</original>
    <variation>L</variation>
    <location>
        <position position="66"/>
    </location>
</feature>
<feature type="mutagenesis site" description="Loss of interaction with NDE1 and the dynein complex. Loss of localization to intracellular membrane vesicles." evidence="13">
    <original>L</original>
    <variation>D</variation>
    <location>
        <position position="72"/>
    </location>
</feature>
<feature type="strand" evidence="22">
    <location>
        <begin position="5"/>
        <end position="13"/>
    </location>
</feature>
<feature type="helix" evidence="22">
    <location>
        <begin position="20"/>
        <end position="29"/>
    </location>
</feature>
<feature type="strand" evidence="22">
    <location>
        <begin position="41"/>
        <end position="51"/>
    </location>
</feature>
<feature type="strand" evidence="22">
    <location>
        <begin position="54"/>
        <end position="62"/>
    </location>
</feature>
<feature type="helix" evidence="22">
    <location>
        <begin position="67"/>
        <end position="69"/>
    </location>
</feature>
<feature type="helix" evidence="22">
    <location>
        <begin position="70"/>
        <end position="73"/>
    </location>
</feature>
<feature type="helix" evidence="22">
    <location>
        <begin position="74"/>
        <end position="77"/>
    </location>
</feature>
<feature type="strand" evidence="22">
    <location>
        <begin position="81"/>
        <end position="88"/>
    </location>
</feature>
<feature type="helix" evidence="22">
    <location>
        <begin position="92"/>
        <end position="96"/>
    </location>
</feature>
<feature type="helix" evidence="22">
    <location>
        <begin position="98"/>
        <end position="109"/>
    </location>
</feature>
<feature type="turn" evidence="22">
    <location>
        <begin position="114"/>
        <end position="116"/>
    </location>
</feature>
<feature type="strand" evidence="22">
    <location>
        <begin position="119"/>
        <end position="124"/>
    </location>
</feature>
<feature type="helix" evidence="22">
    <location>
        <begin position="135"/>
        <end position="144"/>
    </location>
</feature>
<feature type="strand" evidence="22">
    <location>
        <begin position="150"/>
        <end position="152"/>
    </location>
</feature>
<feature type="turn" evidence="22">
    <location>
        <begin position="155"/>
        <end position="157"/>
    </location>
</feature>
<feature type="helix" evidence="22">
    <location>
        <begin position="161"/>
        <end position="173"/>
    </location>
</feature>
<dbReference type="EC" id="3.6.5.2" evidence="3"/>
<dbReference type="EMBL" id="U44103">
    <property type="protein sequence ID" value="AAC51200.1"/>
    <property type="molecule type" value="mRNA"/>
</dbReference>
<dbReference type="EMBL" id="AF498944">
    <property type="protein sequence ID" value="AAM21092.1"/>
    <property type="molecule type" value="mRNA"/>
</dbReference>
<dbReference type="EMBL" id="CR450362">
    <property type="protein sequence ID" value="CAG29358.1"/>
    <property type="molecule type" value="mRNA"/>
</dbReference>
<dbReference type="EMBL" id="AK290505">
    <property type="protein sequence ID" value="BAF83194.1"/>
    <property type="molecule type" value="mRNA"/>
</dbReference>
<dbReference type="EMBL" id="CH471074">
    <property type="protein sequence ID" value="EAW98826.1"/>
    <property type="molecule type" value="Genomic_DNA"/>
</dbReference>
<dbReference type="EMBL" id="BC017265">
    <property type="protein sequence ID" value="AAH17265.1"/>
    <property type="molecule type" value="mRNA"/>
</dbReference>
<dbReference type="CCDS" id="CCDS14156.1"/>
<dbReference type="PIR" id="G02361">
    <property type="entry name" value="G02361"/>
</dbReference>
<dbReference type="RefSeq" id="NP_001182257.1">
    <property type="nucleotide sequence ID" value="NM_001195328.2"/>
</dbReference>
<dbReference type="RefSeq" id="NP_004242.1">
    <property type="nucleotide sequence ID" value="NM_004251.5"/>
</dbReference>
<dbReference type="RefSeq" id="XP_016885453.1">
    <property type="nucleotide sequence ID" value="XM_017029964.1"/>
</dbReference>
<dbReference type="RefSeq" id="XP_047298600.1">
    <property type="nucleotide sequence ID" value="XM_047442644.1"/>
</dbReference>
<dbReference type="RefSeq" id="XP_047298601.1">
    <property type="nucleotide sequence ID" value="XM_047442645.1"/>
</dbReference>
<dbReference type="RefSeq" id="XP_054184110.1">
    <property type="nucleotide sequence ID" value="XM_054328135.1"/>
</dbReference>
<dbReference type="RefSeq" id="XP_054184111.1">
    <property type="nucleotide sequence ID" value="XM_054328136.1"/>
</dbReference>
<dbReference type="PDB" id="1WMS">
    <property type="method" value="X-ray"/>
    <property type="resolution" value="1.25 A"/>
    <property type="chains" value="A/B=1-177"/>
</dbReference>
<dbReference type="PDB" id="7E1T">
    <property type="method" value="X-ray"/>
    <property type="resolution" value="2.45 A"/>
    <property type="chains" value="A/B=1-201"/>
</dbReference>
<dbReference type="PDBsum" id="1WMS"/>
<dbReference type="PDBsum" id="7E1T"/>
<dbReference type="SMR" id="P51151"/>
<dbReference type="BioGRID" id="114768">
    <property type="interactions" value="597"/>
</dbReference>
<dbReference type="CORUM" id="P51151"/>
<dbReference type="DIP" id="DIP-46409N"/>
<dbReference type="FunCoup" id="P51151">
    <property type="interactions" value="768"/>
</dbReference>
<dbReference type="IntAct" id="P51151">
    <property type="interactions" value="194"/>
</dbReference>
<dbReference type="MINT" id="P51151"/>
<dbReference type="STRING" id="9606.ENSP00000420127"/>
<dbReference type="ChEMBL" id="CHEMBL1293294"/>
<dbReference type="DrugBank" id="DB03793">
    <property type="generic name" value="Benzoic acid"/>
</dbReference>
<dbReference type="DrugBank" id="DB04315">
    <property type="generic name" value="Guanosine-5'-Diphosphate"/>
</dbReference>
<dbReference type="GlyGen" id="P51151">
    <property type="glycosylation" value="1 site, 1 O-linked glycan (1 site)"/>
</dbReference>
<dbReference type="iPTMnet" id="P51151"/>
<dbReference type="PhosphoSitePlus" id="P51151"/>
<dbReference type="SwissPalm" id="P51151"/>
<dbReference type="BioMuta" id="RAB9A"/>
<dbReference type="DMDM" id="1710003"/>
<dbReference type="jPOST" id="P51151"/>
<dbReference type="MassIVE" id="P51151"/>
<dbReference type="PaxDb" id="9606-ENSP00000420127"/>
<dbReference type="PeptideAtlas" id="P51151"/>
<dbReference type="ProteomicsDB" id="56285"/>
<dbReference type="Pumba" id="P51151"/>
<dbReference type="Antibodypedia" id="513">
    <property type="antibodies" value="293 antibodies from 35 providers"/>
</dbReference>
<dbReference type="DNASU" id="9367"/>
<dbReference type="Ensembl" id="ENST00000464506.2">
    <property type="protein sequence ID" value="ENSP00000420127.1"/>
    <property type="gene ID" value="ENSG00000123595.8"/>
</dbReference>
<dbReference type="Ensembl" id="ENST00000618931.2">
    <property type="protein sequence ID" value="ENSP00000480777.1"/>
    <property type="gene ID" value="ENSG00000123595.8"/>
</dbReference>
<dbReference type="GeneID" id="9367"/>
<dbReference type="KEGG" id="hsa:9367"/>
<dbReference type="MANE-Select" id="ENST00000464506.2">
    <property type="protein sequence ID" value="ENSP00000420127.1"/>
    <property type="RefSeq nucleotide sequence ID" value="NM_004251.5"/>
    <property type="RefSeq protein sequence ID" value="NP_004242.1"/>
</dbReference>
<dbReference type="UCSC" id="uc004cvm.5">
    <property type="organism name" value="human"/>
</dbReference>
<dbReference type="AGR" id="HGNC:9792"/>
<dbReference type="CTD" id="9367"/>
<dbReference type="DisGeNET" id="9367"/>
<dbReference type="GeneCards" id="RAB9A"/>
<dbReference type="HGNC" id="HGNC:9792">
    <property type="gene designation" value="RAB9A"/>
</dbReference>
<dbReference type="HPA" id="ENSG00000123595">
    <property type="expression patterns" value="Low tissue specificity"/>
</dbReference>
<dbReference type="MIM" id="300284">
    <property type="type" value="gene"/>
</dbReference>
<dbReference type="neXtProt" id="NX_P51151"/>
<dbReference type="OpenTargets" id="ENSG00000123595"/>
<dbReference type="PharmGKB" id="PA34152"/>
<dbReference type="VEuPathDB" id="HostDB:ENSG00000123595"/>
<dbReference type="eggNOG" id="KOG0394">
    <property type="taxonomic scope" value="Eukaryota"/>
</dbReference>
<dbReference type="GeneTree" id="ENSGT00940000158619"/>
<dbReference type="HOGENOM" id="CLU_041217_10_6_1"/>
<dbReference type="InParanoid" id="P51151"/>
<dbReference type="OMA" id="WCAEQKV"/>
<dbReference type="OrthoDB" id="1436450at2759"/>
<dbReference type="PAN-GO" id="P51151">
    <property type="GO annotations" value="4 GO annotations based on evolutionary models"/>
</dbReference>
<dbReference type="PhylomeDB" id="P51151"/>
<dbReference type="TreeFam" id="TF326442"/>
<dbReference type="PathwayCommons" id="P51151"/>
<dbReference type="Reactome" id="R-HSA-6811440">
    <property type="pathway name" value="Retrograde transport at the Trans-Golgi-Network"/>
</dbReference>
<dbReference type="Reactome" id="R-HSA-8873719">
    <property type="pathway name" value="RAB geranylgeranylation"/>
</dbReference>
<dbReference type="Reactome" id="R-HSA-8876198">
    <property type="pathway name" value="RAB GEFs exchange GTP for GDP on RABs"/>
</dbReference>
<dbReference type="Reactome" id="R-HSA-9706019">
    <property type="pathway name" value="RHOBTB3 ATPase cycle"/>
</dbReference>
<dbReference type="SignaLink" id="P51151"/>
<dbReference type="SIGNOR" id="P51151"/>
<dbReference type="BioGRID-ORCS" id="9367">
    <property type="hits" value="18 hits in 779 CRISPR screens"/>
</dbReference>
<dbReference type="ChiTaRS" id="RAB9A">
    <property type="organism name" value="human"/>
</dbReference>
<dbReference type="EvolutionaryTrace" id="P51151"/>
<dbReference type="GeneWiki" id="RAB9A"/>
<dbReference type="GenomeRNAi" id="9367"/>
<dbReference type="Pharos" id="P51151">
    <property type="development level" value="Tbio"/>
</dbReference>
<dbReference type="PRO" id="PR:P51151"/>
<dbReference type="Proteomes" id="UP000005640">
    <property type="component" value="Chromosome X"/>
</dbReference>
<dbReference type="RNAct" id="P51151">
    <property type="molecule type" value="protein"/>
</dbReference>
<dbReference type="Bgee" id="ENSG00000123595">
    <property type="expression patterns" value="Expressed in amniotic fluid and 208 other cell types or tissues"/>
</dbReference>
<dbReference type="ExpressionAtlas" id="P51151">
    <property type="expression patterns" value="baseline and differential"/>
</dbReference>
<dbReference type="GO" id="GO:0005829">
    <property type="term" value="C:cytosol"/>
    <property type="evidence" value="ECO:0000304"/>
    <property type="project" value="Reactome"/>
</dbReference>
<dbReference type="GO" id="GO:0005789">
    <property type="term" value="C:endoplasmic reticulum membrane"/>
    <property type="evidence" value="ECO:0007669"/>
    <property type="project" value="UniProtKB-SubCell"/>
</dbReference>
<dbReference type="GO" id="GO:0070062">
    <property type="term" value="C:extracellular exosome"/>
    <property type="evidence" value="ECO:0007005"/>
    <property type="project" value="UniProtKB"/>
</dbReference>
<dbReference type="GO" id="GO:0000139">
    <property type="term" value="C:Golgi membrane"/>
    <property type="evidence" value="ECO:0007669"/>
    <property type="project" value="UniProtKB-SubCell"/>
</dbReference>
<dbReference type="GO" id="GO:0005770">
    <property type="term" value="C:late endosome"/>
    <property type="evidence" value="ECO:0000314"/>
    <property type="project" value="MGI"/>
</dbReference>
<dbReference type="GO" id="GO:0005764">
    <property type="term" value="C:lysosome"/>
    <property type="evidence" value="ECO:0000314"/>
    <property type="project" value="MGI"/>
</dbReference>
<dbReference type="GO" id="GO:0042470">
    <property type="term" value="C:melanosome"/>
    <property type="evidence" value="ECO:0000250"/>
    <property type="project" value="UniProtKB"/>
</dbReference>
<dbReference type="GO" id="GO:0045335">
    <property type="term" value="C:phagocytic vesicle"/>
    <property type="evidence" value="ECO:0000314"/>
    <property type="project" value="UniProtKB"/>
</dbReference>
<dbReference type="GO" id="GO:0030670">
    <property type="term" value="C:phagocytic vesicle membrane"/>
    <property type="evidence" value="ECO:0007669"/>
    <property type="project" value="UniProtKB-SubCell"/>
</dbReference>
<dbReference type="GO" id="GO:0005886">
    <property type="term" value="C:plasma membrane"/>
    <property type="evidence" value="ECO:0007669"/>
    <property type="project" value="UniProtKB-SubCell"/>
</dbReference>
<dbReference type="GO" id="GO:0032588">
    <property type="term" value="C:trans-Golgi network membrane"/>
    <property type="evidence" value="ECO:0000304"/>
    <property type="project" value="Reactome"/>
</dbReference>
<dbReference type="GO" id="GO:0030133">
    <property type="term" value="C:transport vesicle"/>
    <property type="evidence" value="ECO:0000304"/>
    <property type="project" value="Reactome"/>
</dbReference>
<dbReference type="GO" id="GO:0003925">
    <property type="term" value="F:G protein activity"/>
    <property type="evidence" value="ECO:0000314"/>
    <property type="project" value="GO_Central"/>
</dbReference>
<dbReference type="GO" id="GO:0019003">
    <property type="term" value="F:GDP binding"/>
    <property type="evidence" value="ECO:0000314"/>
    <property type="project" value="UniProtKB"/>
</dbReference>
<dbReference type="GO" id="GO:0005525">
    <property type="term" value="F:GTP binding"/>
    <property type="evidence" value="ECO:0000314"/>
    <property type="project" value="UniProtKB"/>
</dbReference>
<dbReference type="GO" id="GO:0003924">
    <property type="term" value="F:GTPase activity"/>
    <property type="evidence" value="ECO:0000314"/>
    <property type="project" value="UniProtKB"/>
</dbReference>
<dbReference type="GO" id="GO:0042802">
    <property type="term" value="F:identical protein binding"/>
    <property type="evidence" value="ECO:0007669"/>
    <property type="project" value="Ensembl"/>
</dbReference>
<dbReference type="GO" id="GO:0045921">
    <property type="term" value="P:positive regulation of exocytosis"/>
    <property type="evidence" value="ECO:0000315"/>
    <property type="project" value="UniProtKB"/>
</dbReference>
<dbReference type="GO" id="GO:0015031">
    <property type="term" value="P:protein transport"/>
    <property type="evidence" value="ECO:0007669"/>
    <property type="project" value="UniProtKB-KW"/>
</dbReference>
<dbReference type="GO" id="GO:0032482">
    <property type="term" value="P:Rab protein signal transduction"/>
    <property type="evidence" value="ECO:0007669"/>
    <property type="project" value="InterPro"/>
</dbReference>
<dbReference type="GO" id="GO:0006898">
    <property type="term" value="P:receptor-mediated endocytosis"/>
    <property type="evidence" value="ECO:0000314"/>
    <property type="project" value="GO_Central"/>
</dbReference>
<dbReference type="GO" id="GO:0032880">
    <property type="term" value="P:regulation of protein localization"/>
    <property type="evidence" value="ECO:0000315"/>
    <property type="project" value="AgBase"/>
</dbReference>
<dbReference type="GO" id="GO:0042147">
    <property type="term" value="P:retrograde transport, endosome to Golgi"/>
    <property type="evidence" value="ECO:0000318"/>
    <property type="project" value="GO_Central"/>
</dbReference>
<dbReference type="CDD" id="cd04116">
    <property type="entry name" value="Rab9"/>
    <property type="match status" value="1"/>
</dbReference>
<dbReference type="FunFam" id="3.40.50.300:FF:000360">
    <property type="entry name" value="RAB9B, member RAS oncogene family"/>
    <property type="match status" value="1"/>
</dbReference>
<dbReference type="Gene3D" id="3.40.50.300">
    <property type="entry name" value="P-loop containing nucleotide triphosphate hydrolases"/>
    <property type="match status" value="1"/>
</dbReference>
<dbReference type="InterPro" id="IPR027417">
    <property type="entry name" value="P-loop_NTPase"/>
</dbReference>
<dbReference type="InterPro" id="IPR041824">
    <property type="entry name" value="Rab9"/>
</dbReference>
<dbReference type="InterPro" id="IPR005225">
    <property type="entry name" value="Small_GTP-bd"/>
</dbReference>
<dbReference type="InterPro" id="IPR001806">
    <property type="entry name" value="Small_GTPase"/>
</dbReference>
<dbReference type="NCBIfam" id="TIGR00231">
    <property type="entry name" value="small_GTP"/>
    <property type="match status" value="1"/>
</dbReference>
<dbReference type="PANTHER" id="PTHR47981">
    <property type="entry name" value="RAB FAMILY"/>
    <property type="match status" value="1"/>
</dbReference>
<dbReference type="PANTHER" id="PTHR47981:SF9">
    <property type="entry name" value="RAS-RELATED PROTEIN RAB-9A"/>
    <property type="match status" value="1"/>
</dbReference>
<dbReference type="Pfam" id="PF00071">
    <property type="entry name" value="Ras"/>
    <property type="match status" value="1"/>
</dbReference>
<dbReference type="PRINTS" id="PR00449">
    <property type="entry name" value="RASTRNSFRMNG"/>
</dbReference>
<dbReference type="SMART" id="SM00175">
    <property type="entry name" value="RAB"/>
    <property type="match status" value="1"/>
</dbReference>
<dbReference type="SMART" id="SM00176">
    <property type="entry name" value="RAN"/>
    <property type="match status" value="1"/>
</dbReference>
<dbReference type="SMART" id="SM00173">
    <property type="entry name" value="RAS"/>
    <property type="match status" value="1"/>
</dbReference>
<dbReference type="SMART" id="SM00174">
    <property type="entry name" value="RHO"/>
    <property type="match status" value="1"/>
</dbReference>
<dbReference type="SUPFAM" id="SSF52540">
    <property type="entry name" value="P-loop containing nucleoside triphosphate hydrolases"/>
    <property type="match status" value="1"/>
</dbReference>
<dbReference type="PROSITE" id="PS51419">
    <property type="entry name" value="RAB"/>
    <property type="match status" value="1"/>
</dbReference>